<keyword id="KW-0002">3D-structure</keyword>
<keyword id="KW-1003">Cell membrane</keyword>
<keyword id="KW-0297">G-protein coupled receptor</keyword>
<keyword id="KW-0325">Glycoprotein</keyword>
<keyword id="KW-0472">Membrane</keyword>
<keyword id="KW-0597">Phosphoprotein</keyword>
<keyword id="KW-1267">Proteomics identification</keyword>
<keyword id="KW-0675">Receptor</keyword>
<keyword id="KW-1185">Reference proteome</keyword>
<keyword id="KW-0807">Transducer</keyword>
<keyword id="KW-0812">Transmembrane</keyword>
<keyword id="KW-1133">Transmembrane helix</keyword>
<sequence length="352" mass="37557">MNTTSSAAPPSLGVEFISLLAIILLSVALAVGLPGNSFVVWSILKRMQKRSVTALMVLNLALADLAVLLTAPFFLHFLAQGTWSFGLAGCRLCHYVCGVSMYASVLLITAMSLDRSLAVARPFVSQKLRTKAMARRVLAGIWVLSFLLATPVLAYRTVVPWKTNMSLCFPRYPSEGHRAFHLIFEAVTGFLLPFLAVVASYSDIGRRLQARRFRRSRRTGRLVVLIILTFAAFWLPYHVVNLAEAGRALAGQAAGLGLVGKRLSLARNVLIALAFLSSSVNPVLYACAGGGLLRSAGVGFVAKLLEGTGSEASSTRRGGSLGQTARSGPAALEPGPSESLTASSPLKLNELN</sequence>
<proteinExistence type="evidence at protein level"/>
<organism>
    <name type="scientific">Homo sapiens</name>
    <name type="common">Human</name>
    <dbReference type="NCBI Taxonomy" id="9606"/>
    <lineage>
        <taxon>Eukaryota</taxon>
        <taxon>Metazoa</taxon>
        <taxon>Chordata</taxon>
        <taxon>Craniata</taxon>
        <taxon>Vertebrata</taxon>
        <taxon>Euteleostomi</taxon>
        <taxon>Mammalia</taxon>
        <taxon>Eutheria</taxon>
        <taxon>Euarchontoglires</taxon>
        <taxon>Primates</taxon>
        <taxon>Haplorrhini</taxon>
        <taxon>Catarrhini</taxon>
        <taxon>Hominidae</taxon>
        <taxon>Homo</taxon>
    </lineage>
</organism>
<name>LT4R1_HUMAN</name>
<comment type="function">
    <text>Receptor for extracellular ATP &gt; UTP and ADP. The activity of this receptor is mediated by G proteins which activate a phosphatidylinositol-calcium second messenger system. May be the cardiac P2Y receptor involved in the regulation of cardiac muscle contraction through modulation of L-type calcium currents. Is a receptor for leukotriene B4, a potent chemoattractant involved in inflammation and immune response.</text>
</comment>
<comment type="subcellular location">
    <subcellularLocation>
        <location>Cell membrane</location>
        <topology>Multi-pass membrane protein</topology>
    </subcellularLocation>
</comment>
<comment type="tissue specificity">
    <text>Expressed at highest levels in heart, skeletal muscle and at lower levels in brain and liver. High level of expression in lymphoid tissues.</text>
</comment>
<comment type="PTM">
    <text evidence="4">Phosphorylated by GRK6 upon leukotriene B4 binding; which promotes desensitization.</text>
</comment>
<comment type="similarity">
    <text evidence="2">Belongs to the G-protein coupled receptor 1 family.</text>
</comment>
<comment type="sequence caution" evidence="7">
    <conflict type="erroneous initiation">
        <sequence resource="EMBL-CDS" id="AAB16747"/>
    </conflict>
</comment>
<evidence type="ECO:0000255" key="1"/>
<evidence type="ECO:0000255" key="2">
    <source>
        <dbReference type="PROSITE-ProRule" id="PRU00521"/>
    </source>
</evidence>
<evidence type="ECO:0000256" key="3">
    <source>
        <dbReference type="SAM" id="MobiDB-lite"/>
    </source>
</evidence>
<evidence type="ECO:0000269" key="4">
    <source>
    </source>
</evidence>
<evidence type="ECO:0000269" key="5">
    <source>
    </source>
</evidence>
<evidence type="ECO:0000269" key="6">
    <source ref="7"/>
</evidence>
<evidence type="ECO:0000305" key="7"/>
<evidence type="ECO:0007829" key="8">
    <source>
        <dbReference type="PDB" id="7K15"/>
    </source>
</evidence>
<gene>
    <name type="primary">LTB4R</name>
    <name type="synonym">BLT</name>
    <name type="synonym">BLT1</name>
    <name type="synonym">BLTR</name>
    <name type="synonym">CMKRL1</name>
    <name type="synonym">GPR16</name>
    <name type="synonym">P2RY7</name>
</gene>
<feature type="chain" id="PRO_0000069708" description="Leukotriene B4 receptor 1">
    <location>
        <begin position="1"/>
        <end position="352"/>
    </location>
</feature>
<feature type="topological domain" description="Extracellular" evidence="1">
    <location>
        <begin position="1"/>
        <end position="19"/>
    </location>
</feature>
<feature type="transmembrane region" description="Helical; Name=1" evidence="1">
    <location>
        <begin position="20"/>
        <end position="42"/>
    </location>
</feature>
<feature type="topological domain" description="Cytoplasmic" evidence="1">
    <location>
        <begin position="43"/>
        <end position="54"/>
    </location>
</feature>
<feature type="transmembrane region" description="Helical; Name=2" evidence="1">
    <location>
        <begin position="55"/>
        <end position="75"/>
    </location>
</feature>
<feature type="topological domain" description="Extracellular" evidence="1">
    <location>
        <begin position="76"/>
        <end position="91"/>
    </location>
</feature>
<feature type="transmembrane region" description="Helical; Name=3" evidence="1">
    <location>
        <begin position="92"/>
        <end position="113"/>
    </location>
</feature>
<feature type="topological domain" description="Cytoplasmic" evidence="1">
    <location>
        <begin position="114"/>
        <end position="138"/>
    </location>
</feature>
<feature type="transmembrane region" description="Helical; Name=4" evidence="1">
    <location>
        <begin position="139"/>
        <end position="159"/>
    </location>
</feature>
<feature type="topological domain" description="Extracellular" evidence="1">
    <location>
        <begin position="160"/>
        <end position="178"/>
    </location>
</feature>
<feature type="transmembrane region" description="Helical; Name=5" evidence="1">
    <location>
        <begin position="179"/>
        <end position="199"/>
    </location>
</feature>
<feature type="topological domain" description="Cytoplasmic" evidence="1">
    <location>
        <begin position="200"/>
        <end position="221"/>
    </location>
</feature>
<feature type="transmembrane region" description="Helical; Name=6" evidence="1">
    <location>
        <begin position="222"/>
        <end position="242"/>
    </location>
</feature>
<feature type="topological domain" description="Extracellular" evidence="1">
    <location>
        <begin position="243"/>
        <end position="268"/>
    </location>
</feature>
<feature type="transmembrane region" description="Helical; Name=7" evidence="1">
    <location>
        <begin position="269"/>
        <end position="289"/>
    </location>
</feature>
<feature type="topological domain" description="Cytoplasmic" evidence="1">
    <location>
        <begin position="290"/>
        <end position="352"/>
    </location>
</feature>
<feature type="region of interest" description="Disordered" evidence="3">
    <location>
        <begin position="310"/>
        <end position="352"/>
    </location>
</feature>
<feature type="compositionally biased region" description="Polar residues" evidence="3">
    <location>
        <begin position="310"/>
        <end position="326"/>
    </location>
</feature>
<feature type="compositionally biased region" description="Polar residues" evidence="3">
    <location>
        <begin position="338"/>
        <end position="352"/>
    </location>
</feature>
<feature type="glycosylation site" description="N-linked (GlcNAc...) asparagine" evidence="1">
    <location>
        <position position="2"/>
    </location>
</feature>
<feature type="glycosylation site" description="N-linked (GlcNAc...) asparagine" evidence="1">
    <location>
        <position position="164"/>
    </location>
</feature>
<feature type="sequence variant" id="VAR_060679" description="In dbSNP:rs17849864." evidence="5 6">
    <original>L</original>
    <variation>F</variation>
    <location>
        <position position="346"/>
    </location>
</feature>
<feature type="mutagenesis site" description="No effect on affinity for leukotriene B4, induces resistance to desensitization by GRK6, but minor effect on phosphorylation by GRK6." evidence="4">
    <original>T</original>
    <variation>P</variation>
    <variation>A</variation>
    <location>
        <position position="308"/>
    </location>
</feature>
<feature type="mutagenesis site" description="No effect on affinity for leukotriene B4 or on desensitization by GRK6." evidence="4">
    <original>S</original>
    <variation>A</variation>
    <location>
        <position position="310"/>
    </location>
</feature>
<feature type="sequence conflict" description="In Ref. 4; CAA67001." evidence="7" ref="4">
    <original>G</original>
    <variation>R</variation>
    <location>
        <position position="246"/>
    </location>
</feature>
<feature type="sequence conflict" description="In Ref. 1; AAC50628." evidence="7" ref="1">
    <original>A</original>
    <variation>V</variation>
    <location>
        <position position="272"/>
    </location>
</feature>
<feature type="sequence conflict" description="In Ref. 1; AAC50628." evidence="7" ref="1">
    <original>L</original>
    <variation>V</variation>
    <location>
        <position position="293"/>
    </location>
</feature>
<feature type="helix" evidence="8">
    <location>
        <begin position="14"/>
        <end position="44"/>
    </location>
</feature>
<feature type="helix" evidence="8">
    <location>
        <begin position="52"/>
        <end position="68"/>
    </location>
</feature>
<feature type="helix" evidence="8">
    <location>
        <begin position="71"/>
        <end position="80"/>
    </location>
</feature>
<feature type="helix" evidence="8">
    <location>
        <begin position="86"/>
        <end position="120"/>
    </location>
</feature>
<feature type="helix" evidence="8">
    <location>
        <begin position="122"/>
        <end position="128"/>
    </location>
</feature>
<feature type="helix" evidence="8">
    <location>
        <begin position="131"/>
        <end position="148"/>
    </location>
</feature>
<feature type="helix" evidence="8">
    <location>
        <begin position="152"/>
        <end position="155"/>
    </location>
</feature>
<feature type="strand" evidence="8">
    <location>
        <begin position="156"/>
        <end position="160"/>
    </location>
</feature>
<feature type="strand" evidence="8">
    <location>
        <begin position="166"/>
        <end position="170"/>
    </location>
</feature>
<feature type="helix" evidence="8">
    <location>
        <begin position="175"/>
        <end position="189"/>
    </location>
</feature>
<feature type="helix" evidence="8">
    <location>
        <begin position="191"/>
        <end position="208"/>
    </location>
</feature>
<feature type="helix" evidence="8">
    <location>
        <begin position="221"/>
        <end position="249"/>
    </location>
</feature>
<feature type="strand" evidence="8">
    <location>
        <begin position="257"/>
        <end position="259"/>
    </location>
</feature>
<feature type="helix" evidence="8">
    <location>
        <begin position="260"/>
        <end position="277"/>
    </location>
</feature>
<feature type="helix" evidence="8">
    <location>
        <begin position="280"/>
        <end position="292"/>
    </location>
</feature>
<feature type="helix" evidence="8">
    <location>
        <begin position="294"/>
        <end position="296"/>
    </location>
</feature>
<feature type="helix" evidence="8">
    <location>
        <begin position="298"/>
        <end position="305"/>
    </location>
</feature>
<feature type="strand" evidence="8">
    <location>
        <begin position="307"/>
        <end position="309"/>
    </location>
</feature>
<dbReference type="EMBL" id="U41070">
    <property type="protein sequence ID" value="AAC50628.1"/>
    <property type="molecule type" value="mRNA"/>
</dbReference>
<dbReference type="EMBL" id="U33448">
    <property type="protein sequence ID" value="AAB16747.1"/>
    <property type="status" value="ALT_INIT"/>
    <property type="molecule type" value="Genomic_DNA"/>
</dbReference>
<dbReference type="EMBL" id="D89079">
    <property type="protein sequence ID" value="BAA20424.1"/>
    <property type="molecule type" value="mRNA"/>
</dbReference>
<dbReference type="EMBL" id="D89078">
    <property type="protein sequence ID" value="BAA20423.1"/>
    <property type="molecule type" value="mRNA"/>
</dbReference>
<dbReference type="EMBL" id="X98356">
    <property type="protein sequence ID" value="CAA67001.1"/>
    <property type="molecule type" value="mRNA"/>
</dbReference>
<dbReference type="EMBL" id="AB008193">
    <property type="protein sequence ID" value="BAB00611.1"/>
    <property type="molecule type" value="Genomic_DNA"/>
</dbReference>
<dbReference type="EMBL" id="AY322535">
    <property type="protein sequence ID" value="AAP84348.1"/>
    <property type="molecule type" value="Genomic_DNA"/>
</dbReference>
<dbReference type="EMBL" id="BT007267">
    <property type="protein sequence ID" value="AAP35931.1"/>
    <property type="molecule type" value="mRNA"/>
</dbReference>
<dbReference type="EMBL" id="BC004545">
    <property type="protein sequence ID" value="AAH04545.1"/>
    <property type="molecule type" value="mRNA"/>
</dbReference>
<dbReference type="CCDS" id="CCDS9626.1"/>
<dbReference type="RefSeq" id="NP_001137391.1">
    <property type="nucleotide sequence ID" value="NM_001143919.3"/>
</dbReference>
<dbReference type="RefSeq" id="NP_858043.1">
    <property type="nucleotide sequence ID" value="NM_181657.3"/>
</dbReference>
<dbReference type="PDB" id="7K15">
    <property type="method" value="X-ray"/>
    <property type="resolution" value="2.88 A"/>
    <property type="chains" value="A=5-310"/>
</dbReference>
<dbReference type="PDB" id="7VKT">
    <property type="method" value="EM"/>
    <property type="resolution" value="2.90 A"/>
    <property type="chains" value="A=1-352"/>
</dbReference>
<dbReference type="PDBsum" id="7K15"/>
<dbReference type="PDBsum" id="7VKT"/>
<dbReference type="EMDB" id="EMD-32018"/>
<dbReference type="SMR" id="Q15722"/>
<dbReference type="BioGRID" id="107645">
    <property type="interactions" value="10"/>
</dbReference>
<dbReference type="FunCoup" id="Q15722">
    <property type="interactions" value="1091"/>
</dbReference>
<dbReference type="IntAct" id="Q15722">
    <property type="interactions" value="1"/>
</dbReference>
<dbReference type="STRING" id="9606.ENSP00000380008"/>
<dbReference type="BindingDB" id="Q15722"/>
<dbReference type="ChEMBL" id="CHEMBL3911"/>
<dbReference type="DrugBank" id="DB06248">
    <property type="generic name" value="Amelubant"/>
</dbReference>
<dbReference type="DrugBank" id="DB13053">
    <property type="generic name" value="CP-195543"/>
</dbReference>
<dbReference type="DrugBank" id="DB12850">
    <property type="generic name" value="Etalocib"/>
</dbReference>
<dbReference type="DrugBank" id="DB12961">
    <property type="generic name" value="Leukotriene B4"/>
</dbReference>
<dbReference type="DrugBank" id="DB09285">
    <property type="generic name" value="Morniflumate"/>
</dbReference>
<dbReference type="DrugBank" id="DB17101">
    <property type="generic name" value="SC 41930"/>
</dbReference>
<dbReference type="DrugCentral" id="Q15722"/>
<dbReference type="GuidetoPHARMACOLOGY" id="267"/>
<dbReference type="SwissLipids" id="SLP:000001555"/>
<dbReference type="TCDB" id="9.A.14.13.5">
    <property type="family name" value="the g-protein-coupled receptor (gpcr) family"/>
</dbReference>
<dbReference type="GlyCosmos" id="Q15722">
    <property type="glycosylation" value="2 sites, No reported glycans"/>
</dbReference>
<dbReference type="GlyGen" id="Q15722">
    <property type="glycosylation" value="2 sites"/>
</dbReference>
<dbReference type="iPTMnet" id="Q15722"/>
<dbReference type="PhosphoSitePlus" id="Q15722"/>
<dbReference type="BioMuta" id="LTB4R"/>
<dbReference type="DMDM" id="3041713"/>
<dbReference type="MassIVE" id="Q15722"/>
<dbReference type="PaxDb" id="9606-ENSP00000380008"/>
<dbReference type="PeptideAtlas" id="Q15722"/>
<dbReference type="ProteomicsDB" id="60717"/>
<dbReference type="Antibodypedia" id="193">
    <property type="antibodies" value="516 antibodies from 33 providers"/>
</dbReference>
<dbReference type="DNASU" id="1241"/>
<dbReference type="Ensembl" id="ENST00000345363.8">
    <property type="protein sequence ID" value="ENSP00000307445.3"/>
    <property type="gene ID" value="ENSG00000213903.9"/>
</dbReference>
<dbReference type="Ensembl" id="ENST00000396782.2">
    <property type="protein sequence ID" value="ENSP00000380002.2"/>
    <property type="gene ID" value="ENSG00000213903.9"/>
</dbReference>
<dbReference type="Ensembl" id="ENST00000396789.4">
    <property type="protein sequence ID" value="ENSP00000380008.4"/>
    <property type="gene ID" value="ENSG00000213903.9"/>
</dbReference>
<dbReference type="Ensembl" id="ENST00000646659.1">
    <property type="protein sequence ID" value="ENSP00000495785.1"/>
    <property type="gene ID" value="ENSG00000285456.2"/>
</dbReference>
<dbReference type="Ensembl" id="ENST00000646739.1">
    <property type="protein sequence ID" value="ENSP00000494730.1"/>
    <property type="gene ID" value="ENSG00000285456.2"/>
</dbReference>
<dbReference type="Ensembl" id="ENST00000647085.2">
    <property type="protein sequence ID" value="ENSP00000495466.1"/>
    <property type="gene ID" value="ENSG00000285456.2"/>
</dbReference>
<dbReference type="GeneID" id="1241"/>
<dbReference type="KEGG" id="hsa:1241"/>
<dbReference type="MANE-Select" id="ENST00000345363.8">
    <property type="protein sequence ID" value="ENSP00000307445.3"/>
    <property type="RefSeq nucleotide sequence ID" value="NM_001143919.3"/>
    <property type="RefSeq protein sequence ID" value="NP_001137391.1"/>
</dbReference>
<dbReference type="UCSC" id="uc001wos.4">
    <property type="organism name" value="human"/>
</dbReference>
<dbReference type="AGR" id="HGNC:6713"/>
<dbReference type="CTD" id="1241"/>
<dbReference type="DisGeNET" id="1241"/>
<dbReference type="GeneCards" id="LTB4R"/>
<dbReference type="HGNC" id="HGNC:6713">
    <property type="gene designation" value="LTB4R"/>
</dbReference>
<dbReference type="HPA" id="ENSG00000213903">
    <property type="expression patterns" value="Tissue enhanced (esophagus, skin)"/>
</dbReference>
<dbReference type="MIM" id="601531">
    <property type="type" value="gene"/>
</dbReference>
<dbReference type="neXtProt" id="NX_Q15722"/>
<dbReference type="OpenTargets" id="ENSG00000213903"/>
<dbReference type="PharmGKB" id="PA30476"/>
<dbReference type="VEuPathDB" id="HostDB:ENSG00000213903"/>
<dbReference type="eggNOG" id="KOG3656">
    <property type="taxonomic scope" value="Eukaryota"/>
</dbReference>
<dbReference type="GeneTree" id="ENSGT00950000182966"/>
<dbReference type="HOGENOM" id="CLU_009579_8_0_1"/>
<dbReference type="InParanoid" id="Q15722"/>
<dbReference type="OMA" id="LCHYICG"/>
<dbReference type="OrthoDB" id="8888529at2759"/>
<dbReference type="PAN-GO" id="Q15722">
    <property type="GO annotations" value="5 GO annotations based on evolutionary models"/>
</dbReference>
<dbReference type="PhylomeDB" id="Q15722"/>
<dbReference type="TreeFam" id="TF330976"/>
<dbReference type="PathwayCommons" id="Q15722"/>
<dbReference type="Reactome" id="R-HSA-391906">
    <property type="pathway name" value="Leukotriene receptors"/>
</dbReference>
<dbReference type="Reactome" id="R-HSA-416476">
    <property type="pathway name" value="G alpha (q) signalling events"/>
</dbReference>
<dbReference type="SignaLink" id="Q15722"/>
<dbReference type="SIGNOR" id="Q15722"/>
<dbReference type="BioGRID-ORCS" id="1241">
    <property type="hits" value="27 hits in 1160 CRISPR screens"/>
</dbReference>
<dbReference type="ChiTaRS" id="LTB4R">
    <property type="organism name" value="human"/>
</dbReference>
<dbReference type="GeneWiki" id="Leukotriene_B4_receptor"/>
<dbReference type="GenomeRNAi" id="1241"/>
<dbReference type="Pharos" id="Q15722">
    <property type="development level" value="Tchem"/>
</dbReference>
<dbReference type="PRO" id="PR:Q15722"/>
<dbReference type="Proteomes" id="UP000005640">
    <property type="component" value="Chromosome 14"/>
</dbReference>
<dbReference type="RNAct" id="Q15722">
    <property type="molecule type" value="protein"/>
</dbReference>
<dbReference type="Bgee" id="ENSG00000213903">
    <property type="expression patterns" value="Expressed in lower esophagus mucosa and 99 other cell types or tissues"/>
</dbReference>
<dbReference type="ExpressionAtlas" id="Q15722">
    <property type="expression patterns" value="baseline and differential"/>
</dbReference>
<dbReference type="GO" id="GO:0005886">
    <property type="term" value="C:plasma membrane"/>
    <property type="evidence" value="ECO:0000318"/>
    <property type="project" value="GO_Central"/>
</dbReference>
<dbReference type="GO" id="GO:0008528">
    <property type="term" value="F:G protein-coupled peptide receptor activity"/>
    <property type="evidence" value="ECO:0000318"/>
    <property type="project" value="GO_Central"/>
</dbReference>
<dbReference type="GO" id="GO:0001632">
    <property type="term" value="F:leukotriene B4 receptor activity"/>
    <property type="evidence" value="ECO:0000318"/>
    <property type="project" value="GO_Central"/>
</dbReference>
<dbReference type="GO" id="GO:0004974">
    <property type="term" value="F:leukotriene receptor activity"/>
    <property type="evidence" value="ECO:0000304"/>
    <property type="project" value="ProtInc"/>
</dbReference>
<dbReference type="GO" id="GO:0000166">
    <property type="term" value="F:nucleotide binding"/>
    <property type="evidence" value="ECO:0000304"/>
    <property type="project" value="ProtInc"/>
</dbReference>
<dbReference type="GO" id="GO:0007186">
    <property type="term" value="P:G protein-coupled receptor signaling pathway"/>
    <property type="evidence" value="ECO:0000304"/>
    <property type="project" value="ProtInc"/>
</dbReference>
<dbReference type="GO" id="GO:0006955">
    <property type="term" value="P:immune response"/>
    <property type="evidence" value="ECO:0000304"/>
    <property type="project" value="ProtInc"/>
</dbReference>
<dbReference type="GO" id="GO:0006954">
    <property type="term" value="P:inflammatory response"/>
    <property type="evidence" value="ECO:0000304"/>
    <property type="project" value="ProtInc"/>
</dbReference>
<dbReference type="GO" id="GO:0006936">
    <property type="term" value="P:muscle contraction"/>
    <property type="evidence" value="ECO:0000304"/>
    <property type="project" value="ProtInc"/>
</dbReference>
<dbReference type="GO" id="GO:0007218">
    <property type="term" value="P:neuropeptide signaling pathway"/>
    <property type="evidence" value="ECO:0000318"/>
    <property type="project" value="GO_Central"/>
</dbReference>
<dbReference type="GO" id="GO:0007200">
    <property type="term" value="P:phospholipase C-activating G protein-coupled receptor signaling pathway"/>
    <property type="evidence" value="ECO:0000304"/>
    <property type="project" value="ProtInc"/>
</dbReference>
<dbReference type="CDD" id="cd15121">
    <property type="entry name" value="7tmA_LTB4R1"/>
    <property type="match status" value="1"/>
</dbReference>
<dbReference type="FunFam" id="1.20.1070.10:FF:000109">
    <property type="entry name" value="Leukotriene B4 receptor"/>
    <property type="match status" value="1"/>
</dbReference>
<dbReference type="Gene3D" id="1.20.1070.10">
    <property type="entry name" value="Rhodopsin 7-helix transmembrane proteins"/>
    <property type="match status" value="1"/>
</dbReference>
<dbReference type="InterPro" id="IPR000826">
    <property type="entry name" value="Formyl_rcpt-rel"/>
</dbReference>
<dbReference type="InterPro" id="IPR000276">
    <property type="entry name" value="GPCR_Rhodpsn"/>
</dbReference>
<dbReference type="InterPro" id="IPR017452">
    <property type="entry name" value="GPCR_Rhodpsn_7TM"/>
</dbReference>
<dbReference type="InterPro" id="IPR003981">
    <property type="entry name" value="Leukotriene_B4_rcpt"/>
</dbReference>
<dbReference type="InterPro" id="IPR003983">
    <property type="entry name" value="Leukotriene_B4_typ-1_rcpt"/>
</dbReference>
<dbReference type="PANTHER" id="PTHR24225">
    <property type="entry name" value="CHEMOTACTIC RECEPTOR"/>
    <property type="match status" value="1"/>
</dbReference>
<dbReference type="PANTHER" id="PTHR24225:SF72">
    <property type="entry name" value="G-PROTEIN COUPLED RECEPTORS FAMILY 1 PROFILE DOMAIN-CONTAINING PROTEIN-RELATED"/>
    <property type="match status" value="1"/>
</dbReference>
<dbReference type="Pfam" id="PF00001">
    <property type="entry name" value="7tm_1"/>
    <property type="match status" value="1"/>
</dbReference>
<dbReference type="PRINTS" id="PR00237">
    <property type="entry name" value="GPCRRHODOPSN"/>
</dbReference>
<dbReference type="PRINTS" id="PR01477">
    <property type="entry name" value="LTB1RECEPTOR"/>
</dbReference>
<dbReference type="PRINTS" id="PR01476">
    <property type="entry name" value="LTBRECEPTOR"/>
</dbReference>
<dbReference type="SUPFAM" id="SSF81321">
    <property type="entry name" value="Family A G protein-coupled receptor-like"/>
    <property type="match status" value="1"/>
</dbReference>
<dbReference type="PROSITE" id="PS00237">
    <property type="entry name" value="G_PROTEIN_RECEP_F1_1"/>
    <property type="match status" value="1"/>
</dbReference>
<dbReference type="PROSITE" id="PS50262">
    <property type="entry name" value="G_PROTEIN_RECEP_F1_2"/>
    <property type="match status" value="1"/>
</dbReference>
<reference key="1">
    <citation type="journal article" date="1996" name="J. Biol. Chem.">
        <title>Molecular cloning of a novel P2 purinoceptor from human erythroleukemia cells.</title>
        <authorList>
            <person name="Akbar G.K.M."/>
            <person name="Dasari V.R."/>
            <person name="Webb T."/>
            <person name="Ayyanathan K."/>
            <person name="Pillarisetti K."/>
            <person name="Sandhu A.K."/>
            <person name="Athwal R.S."/>
            <person name="Daniel J.L."/>
            <person name="Ashby B."/>
            <person name="Barnard E.A."/>
            <person name="Kunapuli S.P."/>
        </authorList>
    </citation>
    <scope>NUCLEOTIDE SEQUENCE [MRNA]</scope>
</reference>
<reference key="2">
    <citation type="journal article" date="1996" name="J. Leukoc. Biol.">
        <title>New members of the chemokine receptor gene family.</title>
        <authorList>
            <person name="Raport C.J."/>
            <person name="Schweickart V.L."/>
            <person name="Chantry D."/>
            <person name="Eddy R.L. Jr."/>
            <person name="Shows T.B."/>
            <person name="Godiska R."/>
            <person name="Gray P.W."/>
        </authorList>
    </citation>
    <scope>NUCLEOTIDE SEQUENCE [GENOMIC DNA]</scope>
</reference>
<reference key="3">
    <citation type="journal article" date="1997" name="Nature">
        <title>A G-protein-coupled receptor for leukotriene B4 that mediates chemotaxis.</title>
        <authorList>
            <person name="Yokomizo T."/>
            <person name="Izumi T."/>
            <person name="Chang K."/>
            <person name="Takuwa Y."/>
            <person name="Shimizu T."/>
        </authorList>
    </citation>
    <scope>NUCLEOTIDE SEQUENCE [MRNA]</scope>
</reference>
<reference key="4">
    <citation type="journal article" date="1996" name="Genomics">
        <title>Cloning of cDNA encoding a putative chemoattractant receptor.</title>
        <authorList>
            <person name="Owman C.S.O."/>
            <person name="Nilsson C."/>
            <person name="Lolait S.J."/>
        </authorList>
    </citation>
    <scope>NUCLEOTIDE SEQUENCE [MRNA]</scope>
</reference>
<reference key="5">
    <citation type="journal article" date="2000" name="J. Exp. Med.">
        <title>Cell-specific transcriptional regulation of human leukotriene B(4) receptor gene.</title>
        <authorList>
            <person name="Kato K."/>
            <person name="Yokomizo T."/>
            <person name="Izumi T."/>
            <person name="Shimizu T."/>
        </authorList>
    </citation>
    <scope>NUCLEOTIDE SEQUENCE [GENOMIC DNA]</scope>
</reference>
<reference key="6">
    <citation type="submission" date="2003-06" db="EMBL/GenBank/DDBJ databases">
        <title>Isolation of complete coding sequence for leukotriene B4 receptor (LTB4R).</title>
        <authorList>
            <person name="Kopatz S.A."/>
            <person name="Aronstam R.S."/>
            <person name="Sharma S.V."/>
        </authorList>
    </citation>
    <scope>NUCLEOTIDE SEQUENCE [GENOMIC DNA]</scope>
</reference>
<reference key="7">
    <citation type="submission" date="2003-05" db="EMBL/GenBank/DDBJ databases">
        <title>Cloning of human full-length CDSs in BD Creator(TM) system donor vector.</title>
        <authorList>
            <person name="Kalnine N."/>
            <person name="Chen X."/>
            <person name="Rolfs A."/>
            <person name="Halleck A."/>
            <person name="Hines L."/>
            <person name="Eisenstein S."/>
            <person name="Koundinya M."/>
            <person name="Raphael J."/>
            <person name="Moreira D."/>
            <person name="Kelley T."/>
            <person name="LaBaer J."/>
            <person name="Lin Y."/>
            <person name="Phelan M."/>
            <person name="Farmer A."/>
        </authorList>
    </citation>
    <scope>NUCLEOTIDE SEQUENCE [LARGE SCALE MRNA]</scope>
    <scope>VARIANT PHE-346</scope>
</reference>
<reference key="8">
    <citation type="journal article" date="2004" name="Genome Res.">
        <title>The status, quality, and expansion of the NIH full-length cDNA project: the Mammalian Gene Collection (MGC).</title>
        <authorList>
            <consortium name="The MGC Project Team"/>
        </authorList>
    </citation>
    <scope>NUCLEOTIDE SEQUENCE [LARGE SCALE MRNA]</scope>
    <scope>VARIANT PHE-346</scope>
    <source>
        <tissue>Lung</tissue>
    </source>
</reference>
<reference key="9">
    <citation type="journal article" date="2002" name="J. Biol. Chem.">
        <title>Threonine 308 within a putative casein kinase 2 site of the cytoplasmic tail of leukotriene B(4) receptor (BLT1) is crucial for ligand-induced, G-protein-coupled receptor-specific kinase 6-mediated desensitization.</title>
        <authorList>
            <person name="Gaudreau R."/>
            <person name="Le Gouill C."/>
            <person name="Venne M.-H."/>
            <person name="Stankova J."/>
            <person name="Rola-Pleszczynski M."/>
        </authorList>
    </citation>
    <scope>PHOSPHORYLATION</scope>
    <scope>MUTAGENESIS OF THR-308 AND SER-310</scope>
</reference>
<accession>Q15722</accession>
<accession>Q13305</accession>
<accession>Q53XV5</accession>
<accession>Q92641</accession>
<accession>Q9BSU5</accession>
<protein>
    <recommendedName>
        <fullName>Leukotriene B4 receptor 1</fullName>
        <shortName>LTB4-R 1</shortName>
        <shortName>LTB4-R1</shortName>
    </recommendedName>
    <alternativeName>
        <fullName>Chemoattractant receptor-like 1</fullName>
    </alternativeName>
    <alternativeName>
        <fullName>G-protein coupled receptor 16</fullName>
    </alternativeName>
    <alternativeName>
        <fullName>P2Y purinoceptor 7</fullName>
        <shortName>P2Y7</shortName>
    </alternativeName>
</protein>